<name>RUTC_ECO1A</name>
<reference key="1">
    <citation type="journal article" date="2009" name="Proc. Natl. Acad. Sci. U.S.A.">
        <title>Comparative genomics reveal the mechanism of the parallel evolution of O157 and non-O157 enterohemorrhagic Escherichia coli.</title>
        <authorList>
            <person name="Ogura Y."/>
            <person name="Ooka T."/>
            <person name="Iguchi A."/>
            <person name="Toh H."/>
            <person name="Asadulghani M."/>
            <person name="Oshima K."/>
            <person name="Kodama T."/>
            <person name="Abe H."/>
            <person name="Nakayama K."/>
            <person name="Kurokawa K."/>
            <person name="Tobe T."/>
            <person name="Hattori M."/>
            <person name="Hayashi T."/>
        </authorList>
    </citation>
    <scope>NUCLEOTIDE SEQUENCE [LARGE SCALE GENOMIC DNA]</scope>
    <source>
        <strain>11128 / EHEC</strain>
    </source>
</reference>
<keyword id="KW-0378">Hydrolase</keyword>
<organism>
    <name type="scientific">Escherichia coli O111:H- (strain 11128 / EHEC)</name>
    <dbReference type="NCBI Taxonomy" id="585396"/>
    <lineage>
        <taxon>Bacteria</taxon>
        <taxon>Pseudomonadati</taxon>
        <taxon>Pseudomonadota</taxon>
        <taxon>Gammaproteobacteria</taxon>
        <taxon>Enterobacterales</taxon>
        <taxon>Enterobacteriaceae</taxon>
        <taxon>Escherichia</taxon>
    </lineage>
</organism>
<protein>
    <recommendedName>
        <fullName evidence="1">3-aminoacrylate deaminase RutC</fullName>
        <shortName evidence="1">3-AA deaminase</shortName>
        <ecNumber evidence="1">3.5.-.-</ecNumber>
    </recommendedName>
</protein>
<evidence type="ECO:0000255" key="1">
    <source>
        <dbReference type="HAMAP-Rule" id="MF_00831"/>
    </source>
</evidence>
<accession>C8UMM6</accession>
<comment type="function">
    <text evidence="1">Involved in pyrimidine catabolism. Catalyzes the deamination of 3-aminoacrylate to malonic semialdehyde, a reaction that can also occur spontaneously. RutC may facilitate the reaction and modulate the metabolic fitness, rather than catalyzing essential functions.</text>
</comment>
<comment type="catalytic activity">
    <reaction evidence="1">
        <text>(Z)-3-aminoacrylate + H2O + H(+) = 3-oxopropanoate + NH4(+)</text>
        <dbReference type="Rhea" id="RHEA:34947"/>
        <dbReference type="ChEBI" id="CHEBI:15377"/>
        <dbReference type="ChEBI" id="CHEBI:15378"/>
        <dbReference type="ChEBI" id="CHEBI:28938"/>
        <dbReference type="ChEBI" id="CHEBI:33190"/>
        <dbReference type="ChEBI" id="CHEBI:59894"/>
    </reaction>
</comment>
<comment type="subunit">
    <text evidence="1">Homotrimer.</text>
</comment>
<comment type="similarity">
    <text evidence="1">Belongs to the RutC family.</text>
</comment>
<sequence length="128" mass="13775">MPKSVIIPAGSSAPLAPFVPGTLADGVVYVSGTLAFDQHNNVLFADDPKAQTRHVLEIIRKVIETAGGTMADVTFNSIFITDWKNYAAINEIYAEFFPGDKPARFCIQCGLVKPDALVEIATIAHIAK</sequence>
<gene>
    <name evidence="1" type="primary">rutC</name>
    <name type="ordered locus">ECO111_1199</name>
</gene>
<proteinExistence type="inferred from homology"/>
<dbReference type="EC" id="3.5.-.-" evidence="1"/>
<dbReference type="EMBL" id="AP010960">
    <property type="protein sequence ID" value="BAI35146.1"/>
    <property type="molecule type" value="Genomic_DNA"/>
</dbReference>
<dbReference type="RefSeq" id="WP_001126777.1">
    <property type="nucleotide sequence ID" value="NC_013364.1"/>
</dbReference>
<dbReference type="SMR" id="C8UMM6"/>
<dbReference type="KEGG" id="eoi:ECO111_1199"/>
<dbReference type="HOGENOM" id="CLU_100715_7_3_6"/>
<dbReference type="GO" id="GO:0005829">
    <property type="term" value="C:cytosol"/>
    <property type="evidence" value="ECO:0007669"/>
    <property type="project" value="TreeGrafter"/>
</dbReference>
<dbReference type="GO" id="GO:0019239">
    <property type="term" value="F:deaminase activity"/>
    <property type="evidence" value="ECO:0007669"/>
    <property type="project" value="TreeGrafter"/>
</dbReference>
<dbReference type="GO" id="GO:0019740">
    <property type="term" value="P:nitrogen utilization"/>
    <property type="evidence" value="ECO:0007669"/>
    <property type="project" value="UniProtKB-UniRule"/>
</dbReference>
<dbReference type="GO" id="GO:0006212">
    <property type="term" value="P:uracil catabolic process"/>
    <property type="evidence" value="ECO:0007669"/>
    <property type="project" value="UniProtKB-UniRule"/>
</dbReference>
<dbReference type="CDD" id="cd00448">
    <property type="entry name" value="YjgF_YER057c_UK114_family"/>
    <property type="match status" value="1"/>
</dbReference>
<dbReference type="FunFam" id="3.30.1330.40:FF:000003">
    <property type="entry name" value="Putative aminoacrylate peracid reductase RutC"/>
    <property type="match status" value="1"/>
</dbReference>
<dbReference type="Gene3D" id="3.30.1330.40">
    <property type="entry name" value="RutC-like"/>
    <property type="match status" value="1"/>
</dbReference>
<dbReference type="HAMAP" id="MF_00831">
    <property type="entry name" value="RutC"/>
    <property type="match status" value="1"/>
</dbReference>
<dbReference type="InterPro" id="IPR019897">
    <property type="entry name" value="RidA_CS"/>
</dbReference>
<dbReference type="InterPro" id="IPR019898">
    <property type="entry name" value="RutC"/>
</dbReference>
<dbReference type="InterPro" id="IPR035959">
    <property type="entry name" value="RutC-like_sf"/>
</dbReference>
<dbReference type="InterPro" id="IPR006175">
    <property type="entry name" value="YjgF/YER057c/UK114"/>
</dbReference>
<dbReference type="NCBIfam" id="TIGR03610">
    <property type="entry name" value="RutC"/>
    <property type="match status" value="1"/>
</dbReference>
<dbReference type="PANTHER" id="PTHR11803">
    <property type="entry name" value="2-IMINOBUTANOATE/2-IMINOPROPANOATE DEAMINASE RIDA"/>
    <property type="match status" value="1"/>
</dbReference>
<dbReference type="PANTHER" id="PTHR11803:SF58">
    <property type="entry name" value="PROTEIN HMF1-RELATED"/>
    <property type="match status" value="1"/>
</dbReference>
<dbReference type="Pfam" id="PF01042">
    <property type="entry name" value="Ribonuc_L-PSP"/>
    <property type="match status" value="1"/>
</dbReference>
<dbReference type="SUPFAM" id="SSF55298">
    <property type="entry name" value="YjgF-like"/>
    <property type="match status" value="1"/>
</dbReference>
<dbReference type="PROSITE" id="PS01094">
    <property type="entry name" value="UPF0076"/>
    <property type="match status" value="1"/>
</dbReference>
<feature type="chain" id="PRO_0000402733" description="3-aminoacrylate deaminase RutC">
    <location>
        <begin position="1"/>
        <end position="128"/>
    </location>
</feature>